<feature type="chain" id="PRO_1000143678" description="NADH-quinone oxidoreductase subunit C">
    <location>
        <begin position="1"/>
        <end position="202"/>
    </location>
</feature>
<dbReference type="EC" id="7.1.1.-" evidence="1"/>
<dbReference type="EMBL" id="CP001219">
    <property type="protein sequence ID" value="ACK79369.1"/>
    <property type="molecule type" value="Genomic_DNA"/>
</dbReference>
<dbReference type="RefSeq" id="WP_009566652.1">
    <property type="nucleotide sequence ID" value="NC_011761.1"/>
</dbReference>
<dbReference type="SMR" id="B7J7U3"/>
<dbReference type="STRING" id="243159.AFE_2628"/>
<dbReference type="PaxDb" id="243159-AFE_2628"/>
<dbReference type="GeneID" id="65281677"/>
<dbReference type="KEGG" id="afr:AFE_2628"/>
<dbReference type="eggNOG" id="COG0852">
    <property type="taxonomic scope" value="Bacteria"/>
</dbReference>
<dbReference type="HOGENOM" id="CLU_042628_2_1_6"/>
<dbReference type="Proteomes" id="UP000001362">
    <property type="component" value="Chromosome"/>
</dbReference>
<dbReference type="GO" id="GO:0005886">
    <property type="term" value="C:plasma membrane"/>
    <property type="evidence" value="ECO:0007669"/>
    <property type="project" value="UniProtKB-SubCell"/>
</dbReference>
<dbReference type="GO" id="GO:0008137">
    <property type="term" value="F:NADH dehydrogenase (ubiquinone) activity"/>
    <property type="evidence" value="ECO:0007669"/>
    <property type="project" value="InterPro"/>
</dbReference>
<dbReference type="GO" id="GO:0050136">
    <property type="term" value="F:NADH:ubiquinone reductase (non-electrogenic) activity"/>
    <property type="evidence" value="ECO:0007669"/>
    <property type="project" value="UniProtKB-UniRule"/>
</dbReference>
<dbReference type="GO" id="GO:0048038">
    <property type="term" value="F:quinone binding"/>
    <property type="evidence" value="ECO:0007669"/>
    <property type="project" value="UniProtKB-KW"/>
</dbReference>
<dbReference type="Gene3D" id="3.30.460.80">
    <property type="entry name" value="NADH:ubiquinone oxidoreductase, 30kDa subunit"/>
    <property type="match status" value="1"/>
</dbReference>
<dbReference type="HAMAP" id="MF_01357">
    <property type="entry name" value="NDH1_NuoC"/>
    <property type="match status" value="1"/>
</dbReference>
<dbReference type="InterPro" id="IPR010218">
    <property type="entry name" value="NADH_DH_suC"/>
</dbReference>
<dbReference type="InterPro" id="IPR037232">
    <property type="entry name" value="NADH_quin_OxRdtase_su_C/D-like"/>
</dbReference>
<dbReference type="InterPro" id="IPR001268">
    <property type="entry name" value="NADH_UbQ_OxRdtase_30kDa_su"/>
</dbReference>
<dbReference type="InterPro" id="IPR020396">
    <property type="entry name" value="NADH_UbQ_OxRdtase_CS"/>
</dbReference>
<dbReference type="NCBIfam" id="TIGR01961">
    <property type="entry name" value="NuoC_fam"/>
    <property type="match status" value="1"/>
</dbReference>
<dbReference type="NCBIfam" id="NF004730">
    <property type="entry name" value="PRK06074.1-1"/>
    <property type="match status" value="1"/>
</dbReference>
<dbReference type="PANTHER" id="PTHR10884:SF14">
    <property type="entry name" value="NADH DEHYDROGENASE [UBIQUINONE] IRON-SULFUR PROTEIN 3, MITOCHONDRIAL"/>
    <property type="match status" value="1"/>
</dbReference>
<dbReference type="PANTHER" id="PTHR10884">
    <property type="entry name" value="NADH DEHYDROGENASE UBIQUINONE IRON-SULFUR PROTEIN 3"/>
    <property type="match status" value="1"/>
</dbReference>
<dbReference type="Pfam" id="PF00329">
    <property type="entry name" value="Complex1_30kDa"/>
    <property type="match status" value="1"/>
</dbReference>
<dbReference type="SUPFAM" id="SSF143243">
    <property type="entry name" value="Nqo5-like"/>
    <property type="match status" value="1"/>
</dbReference>
<dbReference type="PROSITE" id="PS00542">
    <property type="entry name" value="COMPLEX1_30K"/>
    <property type="match status" value="1"/>
</dbReference>
<organism>
    <name type="scientific">Acidithiobacillus ferrooxidans (strain ATCC 23270 / DSM 14882 / CIP 104768 / NCIMB 8455)</name>
    <name type="common">Ferrobacillus ferrooxidans (strain ATCC 23270)</name>
    <dbReference type="NCBI Taxonomy" id="243159"/>
    <lineage>
        <taxon>Bacteria</taxon>
        <taxon>Pseudomonadati</taxon>
        <taxon>Pseudomonadota</taxon>
        <taxon>Acidithiobacillia</taxon>
        <taxon>Acidithiobacillales</taxon>
        <taxon>Acidithiobacillaceae</taxon>
        <taxon>Acidithiobacillus</taxon>
    </lineage>
</organism>
<keyword id="KW-0997">Cell inner membrane</keyword>
<keyword id="KW-1003">Cell membrane</keyword>
<keyword id="KW-0472">Membrane</keyword>
<keyword id="KW-0520">NAD</keyword>
<keyword id="KW-0874">Quinone</keyword>
<keyword id="KW-1185">Reference proteome</keyword>
<keyword id="KW-1278">Translocase</keyword>
<keyword id="KW-0813">Transport</keyword>
<keyword id="KW-0830">Ubiquinone</keyword>
<reference key="1">
    <citation type="journal article" date="2008" name="BMC Genomics">
        <title>Acidithiobacillus ferrooxidans metabolism: from genome sequence to industrial applications.</title>
        <authorList>
            <person name="Valdes J."/>
            <person name="Pedroso I."/>
            <person name="Quatrini R."/>
            <person name="Dodson R.J."/>
            <person name="Tettelin H."/>
            <person name="Blake R. II"/>
            <person name="Eisen J.A."/>
            <person name="Holmes D.S."/>
        </authorList>
    </citation>
    <scope>NUCLEOTIDE SEQUENCE [LARGE SCALE GENOMIC DNA]</scope>
    <source>
        <strain>ATCC 23270 / DSM 14882 / CIP 104768 / NCIMB 8455</strain>
    </source>
</reference>
<name>NUOC_ACIF2</name>
<comment type="function">
    <text evidence="1">NDH-1 shuttles electrons from NADH, via FMN and iron-sulfur (Fe-S) centers, to quinones in the respiratory chain. The immediate electron acceptor for the enzyme in this species is believed to be ubiquinone. Couples the redox reaction to proton translocation (for every two electrons transferred, four hydrogen ions are translocated across the cytoplasmic membrane), and thus conserves the redox energy in a proton gradient.</text>
</comment>
<comment type="catalytic activity">
    <reaction evidence="1">
        <text>a quinone + NADH + 5 H(+)(in) = a quinol + NAD(+) + 4 H(+)(out)</text>
        <dbReference type="Rhea" id="RHEA:57888"/>
        <dbReference type="ChEBI" id="CHEBI:15378"/>
        <dbReference type="ChEBI" id="CHEBI:24646"/>
        <dbReference type="ChEBI" id="CHEBI:57540"/>
        <dbReference type="ChEBI" id="CHEBI:57945"/>
        <dbReference type="ChEBI" id="CHEBI:132124"/>
    </reaction>
</comment>
<comment type="subunit">
    <text evidence="1">NDH-1 is composed of 14 different subunits. Subunits NuoB, C, D, E, F, and G constitute the peripheral sector of the complex.</text>
</comment>
<comment type="subcellular location">
    <subcellularLocation>
        <location evidence="1">Cell inner membrane</location>
        <topology evidence="1">Peripheral membrane protein</topology>
        <orientation evidence="1">Cytoplasmic side</orientation>
    </subcellularLocation>
</comment>
<comment type="similarity">
    <text evidence="1">Belongs to the complex I 30 kDa subunit family.</text>
</comment>
<accession>B7J7U3</accession>
<sequence>MTDALENLRQHLSDELGATLRTAHLDRGELTVELSREGFPAACLLLRDDVACAFDLLVDVCGVDYSAYGEGLWEGPRFAVVYHLLSLKHRQRLRVRIFADDDLPIVPSVVEVWAAANWFEREAFDLYGILFDGHPDLRRILTDYGFVGHPFRKDFPLVGTVEMRYDADQGRVVYEPTRTEERVVVPRIIREAGEGRYNARNQ</sequence>
<gene>
    <name evidence="1" type="primary">nuoC</name>
    <name type="ordered locus">AFE_2628</name>
</gene>
<evidence type="ECO:0000255" key="1">
    <source>
        <dbReference type="HAMAP-Rule" id="MF_01357"/>
    </source>
</evidence>
<proteinExistence type="inferred from homology"/>
<protein>
    <recommendedName>
        <fullName evidence="1">NADH-quinone oxidoreductase subunit C</fullName>
        <ecNumber evidence="1">7.1.1.-</ecNumber>
    </recommendedName>
    <alternativeName>
        <fullName evidence="1">NADH dehydrogenase I subunit C</fullName>
    </alternativeName>
    <alternativeName>
        <fullName evidence="1">NDH-1 subunit C</fullName>
    </alternativeName>
</protein>